<comment type="similarity">
    <text evidence="1">Belongs to the UPF0225 family.</text>
</comment>
<dbReference type="EMBL" id="CP000668">
    <property type="protein sequence ID" value="ABP39362.1"/>
    <property type="molecule type" value="Genomic_DNA"/>
</dbReference>
<dbReference type="RefSeq" id="WP_002210666.1">
    <property type="nucleotide sequence ID" value="NZ_CP009715.1"/>
</dbReference>
<dbReference type="SMR" id="A4TJA0"/>
<dbReference type="KEGG" id="ypp:YPDSF_0962"/>
<dbReference type="PATRIC" id="fig|386656.14.peg.2885"/>
<dbReference type="Gene3D" id="3.10.450.50">
    <property type="match status" value="1"/>
</dbReference>
<dbReference type="HAMAP" id="MF_00612">
    <property type="entry name" value="UPF0225"/>
    <property type="match status" value="1"/>
</dbReference>
<dbReference type="InterPro" id="IPR032710">
    <property type="entry name" value="NTF2-like_dom_sf"/>
</dbReference>
<dbReference type="InterPro" id="IPR004027">
    <property type="entry name" value="SEC_C_motif"/>
</dbReference>
<dbReference type="InterPro" id="IPR023006">
    <property type="entry name" value="UPF0225"/>
</dbReference>
<dbReference type="InterPro" id="IPR048469">
    <property type="entry name" value="YchJ-like_M"/>
</dbReference>
<dbReference type="NCBIfam" id="NF002449">
    <property type="entry name" value="PRK01617.1"/>
    <property type="match status" value="1"/>
</dbReference>
<dbReference type="NCBIfam" id="NF002486">
    <property type="entry name" value="PRK01752.1"/>
    <property type="match status" value="1"/>
</dbReference>
<dbReference type="PANTHER" id="PTHR33747:SF1">
    <property type="entry name" value="ADENYLATE CYCLASE-ASSOCIATED CAP C-TERMINAL DOMAIN-CONTAINING PROTEIN"/>
    <property type="match status" value="1"/>
</dbReference>
<dbReference type="PANTHER" id="PTHR33747">
    <property type="entry name" value="UPF0225 PROTEIN SCO1677"/>
    <property type="match status" value="1"/>
</dbReference>
<dbReference type="Pfam" id="PF02810">
    <property type="entry name" value="SEC-C"/>
    <property type="match status" value="2"/>
</dbReference>
<dbReference type="Pfam" id="PF17775">
    <property type="entry name" value="YchJ_M-like"/>
    <property type="match status" value="1"/>
</dbReference>
<dbReference type="SUPFAM" id="SSF54427">
    <property type="entry name" value="NTF2-like"/>
    <property type="match status" value="1"/>
</dbReference>
<dbReference type="SUPFAM" id="SSF103642">
    <property type="entry name" value="Sec-C motif"/>
    <property type="match status" value="1"/>
</dbReference>
<feature type="chain" id="PRO_1000056752" description="UPF0225 protein YPDSF_0962">
    <location>
        <begin position="1"/>
        <end position="154"/>
    </location>
</feature>
<reference key="1">
    <citation type="submission" date="2007-02" db="EMBL/GenBank/DDBJ databases">
        <title>Complete sequence of chromosome of Yersinia pestis Pestoides F.</title>
        <authorList>
            <consortium name="US DOE Joint Genome Institute"/>
            <person name="Copeland A."/>
            <person name="Lucas S."/>
            <person name="Lapidus A."/>
            <person name="Barry K."/>
            <person name="Detter J.C."/>
            <person name="Glavina del Rio T."/>
            <person name="Hammon N."/>
            <person name="Israni S."/>
            <person name="Dalin E."/>
            <person name="Tice H."/>
            <person name="Pitluck S."/>
            <person name="Di Bartolo G."/>
            <person name="Chain P."/>
            <person name="Malfatti S."/>
            <person name="Shin M."/>
            <person name="Vergez L."/>
            <person name="Schmutz J."/>
            <person name="Larimer F."/>
            <person name="Land M."/>
            <person name="Hauser L."/>
            <person name="Worsham P."/>
            <person name="Chu M."/>
            <person name="Bearden S."/>
            <person name="Garcia E."/>
            <person name="Richardson P."/>
        </authorList>
    </citation>
    <scope>NUCLEOTIDE SEQUENCE [LARGE SCALE GENOMIC DNA]</scope>
    <source>
        <strain>Pestoides F</strain>
    </source>
</reference>
<sequence length="154" mass="17623">MSELCPCGSILNYHECCGPYILGTQVAAKPAILMRSRYCAYVEKNVDYLIATWHPDCHAQEWRESIIQGFTKTVWHGLTVIAETPGRHPDEAFVEFIARFTDADNAQITAMHERSRFLRIKEHWYYIDGIRPSLGRNDTCLCGSGKKHKKCCGR</sequence>
<gene>
    <name type="ordered locus">YPDSF_0962</name>
</gene>
<name>Y962_YERPP</name>
<proteinExistence type="inferred from homology"/>
<protein>
    <recommendedName>
        <fullName evidence="1">UPF0225 protein YPDSF_0962</fullName>
    </recommendedName>
</protein>
<evidence type="ECO:0000255" key="1">
    <source>
        <dbReference type="HAMAP-Rule" id="MF_00612"/>
    </source>
</evidence>
<organism>
    <name type="scientific">Yersinia pestis (strain Pestoides F)</name>
    <dbReference type="NCBI Taxonomy" id="386656"/>
    <lineage>
        <taxon>Bacteria</taxon>
        <taxon>Pseudomonadati</taxon>
        <taxon>Pseudomonadota</taxon>
        <taxon>Gammaproteobacteria</taxon>
        <taxon>Enterobacterales</taxon>
        <taxon>Yersiniaceae</taxon>
        <taxon>Yersinia</taxon>
    </lineage>
</organism>
<accession>A4TJA0</accession>